<gene>
    <name evidence="1" type="primary">cobS</name>
    <name type="ordered locus">EcE24377A_2274</name>
</gene>
<sequence length="247" mass="26396">MSKLFWAMLSFITRLPVPRRWSQGLDFEHYSRGIITFPLIGLLLGAISGLVFMVLQAWCGVPLAALFSVLVLALMTGGFHLDGLADTCDGVFSARSRDRMLEIMRDSRLGTHGGLALIFVVLAKILVLSELALRGEPILASLAAACAVSRGTAALLMYRHRYAREEGLGNVFIGKIDGRQTCVTLGLAAIFAAVLLPGMHGVAAMVVTMVAIFILGQLLKRTLGGQTGDTLGAAIELGELVFLLALL</sequence>
<protein>
    <recommendedName>
        <fullName evidence="1">Adenosylcobinamide-GDP ribazoletransferase</fullName>
        <ecNumber evidence="1">2.7.8.26</ecNumber>
    </recommendedName>
    <alternativeName>
        <fullName evidence="1">Cobalamin synthase</fullName>
    </alternativeName>
    <alternativeName>
        <fullName evidence="1">Cobalamin-5'-phosphate synthase</fullName>
    </alternativeName>
</protein>
<proteinExistence type="inferred from homology"/>
<name>COBS_ECO24</name>
<reference key="1">
    <citation type="journal article" date="2008" name="J. Bacteriol.">
        <title>The pangenome structure of Escherichia coli: comparative genomic analysis of E. coli commensal and pathogenic isolates.</title>
        <authorList>
            <person name="Rasko D.A."/>
            <person name="Rosovitz M.J."/>
            <person name="Myers G.S.A."/>
            <person name="Mongodin E.F."/>
            <person name="Fricke W.F."/>
            <person name="Gajer P."/>
            <person name="Crabtree J."/>
            <person name="Sebaihia M."/>
            <person name="Thomson N.R."/>
            <person name="Chaudhuri R."/>
            <person name="Henderson I.R."/>
            <person name="Sperandio V."/>
            <person name="Ravel J."/>
        </authorList>
    </citation>
    <scope>NUCLEOTIDE SEQUENCE [LARGE SCALE GENOMIC DNA]</scope>
    <source>
        <strain>E24377A / ETEC</strain>
    </source>
</reference>
<evidence type="ECO:0000255" key="1">
    <source>
        <dbReference type="HAMAP-Rule" id="MF_00719"/>
    </source>
</evidence>
<organism>
    <name type="scientific">Escherichia coli O139:H28 (strain E24377A / ETEC)</name>
    <dbReference type="NCBI Taxonomy" id="331111"/>
    <lineage>
        <taxon>Bacteria</taxon>
        <taxon>Pseudomonadati</taxon>
        <taxon>Pseudomonadota</taxon>
        <taxon>Gammaproteobacteria</taxon>
        <taxon>Enterobacterales</taxon>
        <taxon>Enterobacteriaceae</taxon>
        <taxon>Escherichia</taxon>
    </lineage>
</organism>
<keyword id="KW-0997">Cell inner membrane</keyword>
<keyword id="KW-1003">Cell membrane</keyword>
<keyword id="KW-0169">Cobalamin biosynthesis</keyword>
<keyword id="KW-0460">Magnesium</keyword>
<keyword id="KW-0472">Membrane</keyword>
<keyword id="KW-1185">Reference proteome</keyword>
<keyword id="KW-0808">Transferase</keyword>
<keyword id="KW-0812">Transmembrane</keyword>
<keyword id="KW-1133">Transmembrane helix</keyword>
<comment type="function">
    <text evidence="1">Joins adenosylcobinamide-GDP and alpha-ribazole to generate adenosylcobalamin (Ado-cobalamin). Also synthesizes adenosylcobalamin 5'-phosphate from adenosylcobinamide-GDP and alpha-ribazole 5'-phosphate.</text>
</comment>
<comment type="catalytic activity">
    <reaction evidence="1">
        <text>alpha-ribazole + adenosylcob(III)inamide-GDP = adenosylcob(III)alamin + GMP + H(+)</text>
        <dbReference type="Rhea" id="RHEA:16049"/>
        <dbReference type="ChEBI" id="CHEBI:10329"/>
        <dbReference type="ChEBI" id="CHEBI:15378"/>
        <dbReference type="ChEBI" id="CHEBI:18408"/>
        <dbReference type="ChEBI" id="CHEBI:58115"/>
        <dbReference type="ChEBI" id="CHEBI:60487"/>
        <dbReference type="EC" id="2.7.8.26"/>
    </reaction>
</comment>
<comment type="catalytic activity">
    <reaction evidence="1">
        <text>alpha-ribazole 5'-phosphate + adenosylcob(III)inamide-GDP = adenosylcob(III)alamin 5'-phosphate + GMP + H(+)</text>
        <dbReference type="Rhea" id="RHEA:23560"/>
        <dbReference type="ChEBI" id="CHEBI:15378"/>
        <dbReference type="ChEBI" id="CHEBI:57918"/>
        <dbReference type="ChEBI" id="CHEBI:58115"/>
        <dbReference type="ChEBI" id="CHEBI:60487"/>
        <dbReference type="ChEBI" id="CHEBI:60493"/>
        <dbReference type="EC" id="2.7.8.26"/>
    </reaction>
</comment>
<comment type="cofactor">
    <cofactor evidence="1">
        <name>Mg(2+)</name>
        <dbReference type="ChEBI" id="CHEBI:18420"/>
    </cofactor>
</comment>
<comment type="pathway">
    <text evidence="1">Cofactor biosynthesis; adenosylcobalamin biosynthesis; adenosylcobalamin from cob(II)yrinate a,c-diamide: step 7/7.</text>
</comment>
<comment type="subcellular location">
    <subcellularLocation>
        <location evidence="1">Cell inner membrane</location>
        <topology evidence="1">Multi-pass membrane protein</topology>
    </subcellularLocation>
</comment>
<comment type="similarity">
    <text evidence="1">Belongs to the CobS family.</text>
</comment>
<feature type="chain" id="PRO_1000062088" description="Adenosylcobinamide-GDP ribazoletransferase">
    <location>
        <begin position="1"/>
        <end position="247"/>
    </location>
</feature>
<feature type="transmembrane region" description="Helical" evidence="1">
    <location>
        <begin position="34"/>
        <end position="54"/>
    </location>
</feature>
<feature type="transmembrane region" description="Helical" evidence="1">
    <location>
        <begin position="59"/>
        <end position="79"/>
    </location>
</feature>
<feature type="transmembrane region" description="Helical" evidence="1">
    <location>
        <begin position="113"/>
        <end position="133"/>
    </location>
</feature>
<feature type="transmembrane region" description="Helical" evidence="1">
    <location>
        <begin position="138"/>
        <end position="158"/>
    </location>
</feature>
<feature type="transmembrane region" description="Helical" evidence="1">
    <location>
        <begin position="194"/>
        <end position="214"/>
    </location>
</feature>
<accession>A7ZNF6</accession>
<dbReference type="EC" id="2.7.8.26" evidence="1"/>
<dbReference type="EMBL" id="CP000800">
    <property type="protein sequence ID" value="ABV19680.1"/>
    <property type="molecule type" value="Genomic_DNA"/>
</dbReference>
<dbReference type="RefSeq" id="WP_001297350.1">
    <property type="nucleotide sequence ID" value="NC_009801.1"/>
</dbReference>
<dbReference type="GeneID" id="93775192"/>
<dbReference type="KEGG" id="ecw:EcE24377A_2274"/>
<dbReference type="HOGENOM" id="CLU_057426_1_1_6"/>
<dbReference type="UniPathway" id="UPA00148">
    <property type="reaction ID" value="UER00238"/>
</dbReference>
<dbReference type="Proteomes" id="UP000001122">
    <property type="component" value="Chromosome"/>
</dbReference>
<dbReference type="GO" id="GO:0005886">
    <property type="term" value="C:plasma membrane"/>
    <property type="evidence" value="ECO:0007669"/>
    <property type="project" value="UniProtKB-SubCell"/>
</dbReference>
<dbReference type="GO" id="GO:0051073">
    <property type="term" value="F:adenosylcobinamide-GDP ribazoletransferase activity"/>
    <property type="evidence" value="ECO:0007669"/>
    <property type="project" value="UniProtKB-UniRule"/>
</dbReference>
<dbReference type="GO" id="GO:0008818">
    <property type="term" value="F:cobalamin 5'-phosphate synthase activity"/>
    <property type="evidence" value="ECO:0007669"/>
    <property type="project" value="UniProtKB-UniRule"/>
</dbReference>
<dbReference type="GO" id="GO:0009236">
    <property type="term" value="P:cobalamin biosynthetic process"/>
    <property type="evidence" value="ECO:0007669"/>
    <property type="project" value="UniProtKB-UniRule"/>
</dbReference>
<dbReference type="HAMAP" id="MF_00719">
    <property type="entry name" value="CobS"/>
    <property type="match status" value="1"/>
</dbReference>
<dbReference type="InterPro" id="IPR003805">
    <property type="entry name" value="CobS"/>
</dbReference>
<dbReference type="NCBIfam" id="TIGR00317">
    <property type="entry name" value="cobS"/>
    <property type="match status" value="1"/>
</dbReference>
<dbReference type="PANTHER" id="PTHR34148">
    <property type="entry name" value="ADENOSYLCOBINAMIDE-GDP RIBAZOLETRANSFERASE"/>
    <property type="match status" value="1"/>
</dbReference>
<dbReference type="PANTHER" id="PTHR34148:SF1">
    <property type="entry name" value="ADENOSYLCOBINAMIDE-GDP RIBAZOLETRANSFERASE"/>
    <property type="match status" value="1"/>
</dbReference>
<dbReference type="Pfam" id="PF02654">
    <property type="entry name" value="CobS"/>
    <property type="match status" value="1"/>
</dbReference>